<name>WPP3_ARATH</name>
<gene>
    <name type="primary">WPP3</name>
    <name type="synonym">MAF3</name>
    <name type="ordered locus">At5g27940</name>
    <name type="ORF">F15F15.4</name>
</gene>
<comment type="function">
    <text evidence="1">Regulates the mitotic activity in roots.</text>
</comment>
<comment type="subcellular location">
    <subcellularLocation>
        <location>Cytoplasm</location>
    </subcellularLocation>
    <subcellularLocation>
        <location>Nucleus</location>
    </subcellularLocation>
</comment>
<comment type="tissue specificity">
    <text evidence="3">Expressed in roots, stems and leaves.</text>
</comment>
<evidence type="ECO:0000250" key="1"/>
<evidence type="ECO:0000256" key="2">
    <source>
        <dbReference type="SAM" id="MobiDB-lite"/>
    </source>
</evidence>
<evidence type="ECO:0000269" key="3">
    <source>
    </source>
</evidence>
<evidence type="ECO:0000305" key="4"/>
<sequence>MAETADTINTTVSTPQPQLESRSDETSCLQKHRSDATSEVTKEEKSGGILFSVWPPCQKSRDYVVNSMIKTLSTDSILSYKYGTIKPEEASAVAKSIEEKAYDIASRFVSSDGIKNLEVYGIETSERMIESAEVRFKANGSMELLLNQTIKMMQLLI</sequence>
<reference key="1">
    <citation type="journal article" date="2000" name="Nature">
        <title>Sequence and analysis of chromosome 5 of the plant Arabidopsis thaliana.</title>
        <authorList>
            <person name="Tabata S."/>
            <person name="Kaneko T."/>
            <person name="Nakamura Y."/>
            <person name="Kotani H."/>
            <person name="Kato T."/>
            <person name="Asamizu E."/>
            <person name="Miyajima N."/>
            <person name="Sasamoto S."/>
            <person name="Kimura T."/>
            <person name="Hosouchi T."/>
            <person name="Kawashima K."/>
            <person name="Kohara M."/>
            <person name="Matsumoto M."/>
            <person name="Matsuno A."/>
            <person name="Muraki A."/>
            <person name="Nakayama S."/>
            <person name="Nakazaki N."/>
            <person name="Naruo K."/>
            <person name="Okumura S."/>
            <person name="Shinpo S."/>
            <person name="Takeuchi C."/>
            <person name="Wada T."/>
            <person name="Watanabe A."/>
            <person name="Yamada M."/>
            <person name="Yasuda M."/>
            <person name="Sato S."/>
            <person name="de la Bastide M."/>
            <person name="Huang E."/>
            <person name="Spiegel L."/>
            <person name="Gnoj L."/>
            <person name="O'Shaughnessy A."/>
            <person name="Preston R."/>
            <person name="Habermann K."/>
            <person name="Murray J."/>
            <person name="Johnson D."/>
            <person name="Rohlfing T."/>
            <person name="Nelson J."/>
            <person name="Stoneking T."/>
            <person name="Pepin K."/>
            <person name="Spieth J."/>
            <person name="Sekhon M."/>
            <person name="Armstrong J."/>
            <person name="Becker M."/>
            <person name="Belter E."/>
            <person name="Cordum H."/>
            <person name="Cordes M."/>
            <person name="Courtney L."/>
            <person name="Courtney W."/>
            <person name="Dante M."/>
            <person name="Du H."/>
            <person name="Edwards J."/>
            <person name="Fryman J."/>
            <person name="Haakensen B."/>
            <person name="Lamar E."/>
            <person name="Latreille P."/>
            <person name="Leonard S."/>
            <person name="Meyer R."/>
            <person name="Mulvaney E."/>
            <person name="Ozersky P."/>
            <person name="Riley A."/>
            <person name="Strowmatt C."/>
            <person name="Wagner-McPherson C."/>
            <person name="Wollam A."/>
            <person name="Yoakum M."/>
            <person name="Bell M."/>
            <person name="Dedhia N."/>
            <person name="Parnell L."/>
            <person name="Shah R."/>
            <person name="Rodriguez M."/>
            <person name="Hoon See L."/>
            <person name="Vil D."/>
            <person name="Baker J."/>
            <person name="Kirchoff K."/>
            <person name="Toth K."/>
            <person name="King L."/>
            <person name="Bahret A."/>
            <person name="Miller B."/>
            <person name="Marra M.A."/>
            <person name="Martienssen R."/>
            <person name="McCombie W.R."/>
            <person name="Wilson R.K."/>
            <person name="Murphy G."/>
            <person name="Bancroft I."/>
            <person name="Volckaert G."/>
            <person name="Wambutt R."/>
            <person name="Duesterhoeft A."/>
            <person name="Stiekema W."/>
            <person name="Pohl T."/>
            <person name="Entian K.-D."/>
            <person name="Terryn N."/>
            <person name="Hartley N."/>
            <person name="Bent E."/>
            <person name="Johnson S."/>
            <person name="Langham S.-A."/>
            <person name="McCullagh B."/>
            <person name="Robben J."/>
            <person name="Grymonprez B."/>
            <person name="Zimmermann W."/>
            <person name="Ramsperger U."/>
            <person name="Wedler H."/>
            <person name="Balke K."/>
            <person name="Wedler E."/>
            <person name="Peters S."/>
            <person name="van Staveren M."/>
            <person name="Dirkse W."/>
            <person name="Mooijman P."/>
            <person name="Klein Lankhorst R."/>
            <person name="Weitzenegger T."/>
            <person name="Bothe G."/>
            <person name="Rose M."/>
            <person name="Hauf J."/>
            <person name="Berneiser S."/>
            <person name="Hempel S."/>
            <person name="Feldpausch M."/>
            <person name="Lamberth S."/>
            <person name="Villarroel R."/>
            <person name="Gielen J."/>
            <person name="Ardiles W."/>
            <person name="Bents O."/>
            <person name="Lemcke K."/>
            <person name="Kolesov G."/>
            <person name="Mayer K.F.X."/>
            <person name="Rudd S."/>
            <person name="Schoof H."/>
            <person name="Schueller C."/>
            <person name="Zaccaria P."/>
            <person name="Mewes H.-W."/>
            <person name="Bevan M."/>
            <person name="Fransz P.F."/>
        </authorList>
    </citation>
    <scope>NUCLEOTIDE SEQUENCE [LARGE SCALE GENOMIC DNA]</scope>
    <source>
        <strain>cv. Columbia</strain>
    </source>
</reference>
<reference key="2">
    <citation type="journal article" date="2017" name="Plant J.">
        <title>Araport11: a complete reannotation of the Arabidopsis thaliana reference genome.</title>
        <authorList>
            <person name="Cheng C.Y."/>
            <person name="Krishnakumar V."/>
            <person name="Chan A.P."/>
            <person name="Thibaud-Nissen F."/>
            <person name="Schobel S."/>
            <person name="Town C.D."/>
        </authorList>
    </citation>
    <scope>GENOME REANNOTATION</scope>
    <source>
        <strain>cv. Columbia</strain>
    </source>
</reference>
<reference key="3">
    <citation type="submission" date="2006-07" db="EMBL/GenBank/DDBJ databases">
        <title>Large-scale analysis of RIKEN Arabidopsis full-length (RAFL) cDNAs.</title>
        <authorList>
            <person name="Totoki Y."/>
            <person name="Seki M."/>
            <person name="Ishida J."/>
            <person name="Nakajima M."/>
            <person name="Enju A."/>
            <person name="Kamiya A."/>
            <person name="Narusaka M."/>
            <person name="Shin-i T."/>
            <person name="Nakagawa M."/>
            <person name="Sakamoto N."/>
            <person name="Oishi K."/>
            <person name="Kohara Y."/>
            <person name="Kobayashi M."/>
            <person name="Toyoda A."/>
            <person name="Sakaki Y."/>
            <person name="Sakurai T."/>
            <person name="Iida K."/>
            <person name="Akiyama K."/>
            <person name="Satou M."/>
            <person name="Toyoda T."/>
            <person name="Konagaya A."/>
            <person name="Carninci P."/>
            <person name="Kawai J."/>
            <person name="Hayashizaki Y."/>
            <person name="Shinozaki K."/>
        </authorList>
    </citation>
    <scope>NUCLEOTIDE SEQUENCE [LARGE SCALE MRNA]</scope>
    <source>
        <strain>cv. Columbia</strain>
    </source>
</reference>
<reference key="4">
    <citation type="submission" date="2007-06" db="EMBL/GenBank/DDBJ databases">
        <title>Arabidopsis ORF clones.</title>
        <authorList>
            <person name="Bautista-Mercan V.R."/>
            <person name="Kim C.J."/>
            <person name="Chen H."/>
            <person name="Quan R."/>
            <person name="De Los Reyes C."/>
            <person name="Ecker J.R."/>
        </authorList>
    </citation>
    <scope>NUCLEOTIDE SEQUENCE [LARGE SCALE MRNA]</scope>
    <source>
        <strain>cv. Columbia</strain>
    </source>
</reference>
<reference key="5">
    <citation type="submission" date="2002-03" db="EMBL/GenBank/DDBJ databases">
        <title>Full-length cDNA from Arabidopsis thaliana.</title>
        <authorList>
            <person name="Brover V.V."/>
            <person name="Troukhan M.E."/>
            <person name="Alexandrov N.A."/>
            <person name="Lu Y.-P."/>
            <person name="Flavell R.B."/>
            <person name="Feldmann K.A."/>
        </authorList>
    </citation>
    <scope>NUCLEOTIDE SEQUENCE [LARGE SCALE MRNA]</scope>
</reference>
<reference key="6">
    <citation type="journal article" date="2004" name="Plant Cell">
        <title>Arabidopsis WPP-domain proteins are developmentally associated with the nuclear envelope and promote cell division.</title>
        <authorList>
            <person name="Patel S."/>
            <person name="Rose A."/>
            <person name="Meulia T."/>
            <person name="Dixit R."/>
            <person name="Cyr R.J."/>
            <person name="Meier I."/>
        </authorList>
    </citation>
    <scope>TISSUE SPECIFICITY</scope>
</reference>
<dbReference type="EMBL" id="AC007399">
    <property type="status" value="NOT_ANNOTATED_CDS"/>
    <property type="molecule type" value="Genomic_DNA"/>
</dbReference>
<dbReference type="EMBL" id="CP002688">
    <property type="protein sequence ID" value="AED93747.1"/>
    <property type="molecule type" value="Genomic_DNA"/>
</dbReference>
<dbReference type="EMBL" id="BT030603">
    <property type="protein sequence ID" value="ABR46183.1"/>
    <property type="molecule type" value="mRNA"/>
</dbReference>
<dbReference type="EMBL" id="AK228812">
    <property type="protein sequence ID" value="BAF00708.1"/>
    <property type="molecule type" value="mRNA"/>
</dbReference>
<dbReference type="EMBL" id="AY085851">
    <property type="protein sequence ID" value="AAM63064.1"/>
    <property type="molecule type" value="mRNA"/>
</dbReference>
<dbReference type="RefSeq" id="NP_568504.1">
    <property type="nucleotide sequence ID" value="NM_122676.2"/>
</dbReference>
<dbReference type="SMR" id="Q0WQ91"/>
<dbReference type="IntAct" id="Q0WQ91">
    <property type="interactions" value="1"/>
</dbReference>
<dbReference type="STRING" id="3702.Q0WQ91"/>
<dbReference type="PaxDb" id="3702-AT5G27940.1"/>
<dbReference type="EnsemblPlants" id="AT5G27940.1">
    <property type="protein sequence ID" value="AT5G27940.1"/>
    <property type="gene ID" value="AT5G27940"/>
</dbReference>
<dbReference type="GeneID" id="832861"/>
<dbReference type="Gramene" id="AT5G27940.1">
    <property type="protein sequence ID" value="AT5G27940.1"/>
    <property type="gene ID" value="AT5G27940"/>
</dbReference>
<dbReference type="KEGG" id="ath:AT5G27940"/>
<dbReference type="Araport" id="AT5G27940"/>
<dbReference type="TAIR" id="AT5G27940">
    <property type="gene designation" value="WPP3"/>
</dbReference>
<dbReference type="eggNOG" id="KOG0305">
    <property type="taxonomic scope" value="Eukaryota"/>
</dbReference>
<dbReference type="HOGENOM" id="CLU_101563_1_0_1"/>
<dbReference type="InParanoid" id="Q0WQ91"/>
<dbReference type="OMA" id="LFSVWPP"/>
<dbReference type="PhylomeDB" id="Q0WQ91"/>
<dbReference type="PRO" id="PR:Q0WQ91"/>
<dbReference type="Proteomes" id="UP000006548">
    <property type="component" value="Chromosome 5"/>
</dbReference>
<dbReference type="ExpressionAtlas" id="Q0WQ91">
    <property type="expression patterns" value="baseline and differential"/>
</dbReference>
<dbReference type="GO" id="GO:0005737">
    <property type="term" value="C:cytoplasm"/>
    <property type="evidence" value="ECO:0007669"/>
    <property type="project" value="UniProtKB-SubCell"/>
</dbReference>
<dbReference type="GO" id="GO:0005634">
    <property type="term" value="C:nucleus"/>
    <property type="evidence" value="ECO:0007669"/>
    <property type="project" value="UniProtKB-SubCell"/>
</dbReference>
<dbReference type="GO" id="GO:0048527">
    <property type="term" value="P:lateral root development"/>
    <property type="evidence" value="ECO:0007669"/>
    <property type="project" value="InterPro"/>
</dbReference>
<dbReference type="GO" id="GO:0000278">
    <property type="term" value="P:mitotic cell cycle"/>
    <property type="evidence" value="ECO:0007669"/>
    <property type="project" value="InterPro"/>
</dbReference>
<dbReference type="Gene3D" id="1.10.246.200">
    <property type="entry name" value="WPP domain"/>
    <property type="match status" value="1"/>
</dbReference>
<dbReference type="InterPro" id="IPR044692">
    <property type="entry name" value="WPP1/2/3"/>
</dbReference>
<dbReference type="InterPro" id="IPR025265">
    <property type="entry name" value="WPP_dom"/>
</dbReference>
<dbReference type="InterPro" id="IPR038214">
    <property type="entry name" value="WPP_sf"/>
</dbReference>
<dbReference type="PANTHER" id="PTHR34362">
    <property type="entry name" value="WPP DOMAIN-CONTAINING PROTEIN 1-RELATED"/>
    <property type="match status" value="1"/>
</dbReference>
<dbReference type="PANTHER" id="PTHR34362:SF1">
    <property type="entry name" value="WPP DOMAIN-CONTAINING PROTEIN 1-RELATED"/>
    <property type="match status" value="1"/>
</dbReference>
<dbReference type="Pfam" id="PF13943">
    <property type="entry name" value="WPP"/>
    <property type="match status" value="1"/>
</dbReference>
<protein>
    <recommendedName>
        <fullName>WPP domain-containing protein 3</fullName>
    </recommendedName>
    <alternativeName>
        <fullName>MFP1 attachment factor 3</fullName>
    </alternativeName>
</protein>
<keyword id="KW-0963">Cytoplasm</keyword>
<keyword id="KW-0539">Nucleus</keyword>
<keyword id="KW-1185">Reference proteome</keyword>
<organism>
    <name type="scientific">Arabidopsis thaliana</name>
    <name type="common">Mouse-ear cress</name>
    <dbReference type="NCBI Taxonomy" id="3702"/>
    <lineage>
        <taxon>Eukaryota</taxon>
        <taxon>Viridiplantae</taxon>
        <taxon>Streptophyta</taxon>
        <taxon>Embryophyta</taxon>
        <taxon>Tracheophyta</taxon>
        <taxon>Spermatophyta</taxon>
        <taxon>Magnoliopsida</taxon>
        <taxon>eudicotyledons</taxon>
        <taxon>Gunneridae</taxon>
        <taxon>Pentapetalae</taxon>
        <taxon>rosids</taxon>
        <taxon>malvids</taxon>
        <taxon>Brassicales</taxon>
        <taxon>Brassicaceae</taxon>
        <taxon>Camelineae</taxon>
        <taxon>Arabidopsis</taxon>
    </lineage>
</organism>
<feature type="chain" id="PRO_0000347193" description="WPP domain-containing protein 3">
    <location>
        <begin position="1"/>
        <end position="157"/>
    </location>
</feature>
<feature type="region of interest" description="Disordered" evidence="2">
    <location>
        <begin position="1"/>
        <end position="41"/>
    </location>
</feature>
<feature type="region of interest" description="WPP; degenerate">
    <location>
        <begin position="37"/>
        <end position="138"/>
    </location>
</feature>
<feature type="compositionally biased region" description="Polar residues" evidence="2">
    <location>
        <begin position="1"/>
        <end position="20"/>
    </location>
</feature>
<feature type="compositionally biased region" description="Basic and acidic residues" evidence="2">
    <location>
        <begin position="32"/>
        <end position="41"/>
    </location>
</feature>
<feature type="sequence conflict" description="In Ref. 4; AAM63064." evidence="4" ref="4">
    <original>A</original>
    <variation>S</variation>
    <location>
        <position position="94"/>
    </location>
</feature>
<feature type="sequence conflict" description="In Ref. 4; AAM63064." evidence="4" ref="4">
    <original>T</original>
    <variation>P</variation>
    <location>
        <position position="149"/>
    </location>
</feature>
<accession>Q0WQ91</accession>
<accession>Q8LDR1</accession>
<proteinExistence type="evidence at transcript level"/>